<evidence type="ECO:0000250" key="1"/>
<evidence type="ECO:0000255" key="2"/>
<evidence type="ECO:0000269" key="3">
    <source>
    </source>
</evidence>
<evidence type="ECO:0000269" key="4">
    <source>
    </source>
</evidence>
<evidence type="ECO:0000269" key="5">
    <source>
    </source>
</evidence>
<evidence type="ECO:0000269" key="6">
    <source>
    </source>
</evidence>
<evidence type="ECO:0000269" key="7">
    <source>
    </source>
</evidence>
<evidence type="ECO:0000269" key="8">
    <source>
    </source>
</evidence>
<evidence type="ECO:0000305" key="9"/>
<protein>
    <recommendedName>
        <fullName>Envelope glycoprotein K</fullName>
    </recommendedName>
    <alternativeName>
        <fullName>Syncytial protein</fullName>
    </alternativeName>
</protein>
<feature type="signal peptide">
    <location>
        <begin position="1"/>
        <end position="30"/>
    </location>
</feature>
<feature type="chain" id="PRO_0000038298" description="Envelope glycoprotein K">
    <location>
        <begin position="31"/>
        <end position="338"/>
    </location>
</feature>
<feature type="topological domain" description="Extracellular" evidence="3 8">
    <location>
        <begin position="31"/>
        <end position="121"/>
    </location>
</feature>
<feature type="transmembrane region" description="Helical" evidence="2">
    <location>
        <begin position="122"/>
        <end position="140"/>
    </location>
</feature>
<feature type="topological domain" description="Cytoplasmic" evidence="2">
    <location>
        <begin position="141"/>
        <end position="212"/>
    </location>
</feature>
<feature type="transmembrane region" description="Helical" evidence="2">
    <location>
        <begin position="213"/>
        <end position="233"/>
    </location>
</feature>
<feature type="topological domain" description="Extracellular" evidence="2">
    <location>
        <begin position="234"/>
        <end position="243"/>
    </location>
</feature>
<feature type="transmembrane region" description="Helical" evidence="2">
    <location>
        <begin position="244"/>
        <end position="264"/>
    </location>
</feature>
<feature type="topological domain" description="Cytoplasmic" evidence="2">
    <location>
        <begin position="265"/>
        <end position="301"/>
    </location>
</feature>
<feature type="transmembrane region" description="Helical" evidence="2">
    <location>
        <begin position="302"/>
        <end position="322"/>
    </location>
</feature>
<feature type="topological domain" description="Extracellular" evidence="2">
    <location>
        <begin position="323"/>
        <end position="338"/>
    </location>
</feature>
<feature type="region of interest" description="Involved in fusion" evidence="2">
    <location>
        <begin position="31"/>
        <end position="121"/>
    </location>
</feature>
<feature type="region of interest" description="Interaction with UL20" evidence="2">
    <location>
        <begin position="265"/>
        <end position="301"/>
    </location>
</feature>
<feature type="glycosylation site" description="N-linked (GlcNAc...) asparagine; by host" evidence="9">
    <location>
        <position position="48"/>
    </location>
</feature>
<feature type="glycosylation site" description="N-linked (GlcNAc...) asparagine; by host" evidence="9">
    <location>
        <position position="58"/>
    </location>
</feature>
<feature type="sequence variant" description="In strain: Nonneuroinvasive mutant HF10.">
    <original>F</original>
    <variation>V</variation>
    <location>
        <position position="226"/>
    </location>
</feature>
<feature type="mutagenesis site" description="Induces cell-to-cell fusion capacity in cell culture." evidence="7">
    <original>P</original>
    <variation>S</variation>
    <location>
        <position position="33"/>
    </location>
</feature>
<feature type="mutagenesis site" description="Induces cell-to-cell fusion capacity in cell culture." evidence="3 7">
    <original>A</original>
    <variation>V</variation>
    <location>
        <position position="40"/>
    </location>
</feature>
<feature type="mutagenesis site" description="Induces cell-to-cell fusion capacity in cell culture." evidence="7">
    <original>L</original>
    <variation>F</variation>
    <location>
        <position position="86"/>
    </location>
</feature>
<feature type="mutagenesis site" description="Induces cell-to-cell fusion capacity in cell culture." evidence="7">
    <original>D</original>
    <variation>N</variation>
    <location>
        <position position="99"/>
    </location>
</feature>
<feature type="mutagenesis site" description="Induces cell-to-cell fusion capacity in cell culture." evidence="7">
    <original>A</original>
    <variation>V</variation>
    <location>
        <position position="111"/>
    </location>
</feature>
<feature type="mutagenesis site" description="Induces cell-to-cell fusion capacity in cell culture." evidence="7">
    <original>T</original>
    <variation>I</variation>
    <location>
        <position position="121"/>
    </location>
</feature>
<feature type="mutagenesis site" description="Induces cell-to-cell fusion capacity in cell culture." evidence="7">
    <original>L</original>
    <variation>P</variation>
    <location>
        <position position="304"/>
    </location>
</feature>
<feature type="mutagenesis site" description="Induces cell-to-cell fusion capacity in cell culture." evidence="7">
    <original>R</original>
    <variation>L</variation>
    <location>
        <position position="310"/>
    </location>
</feature>
<dbReference type="EMBL" id="X14112">
    <property type="protein sequence ID" value="CAA32289.1"/>
    <property type="molecule type" value="Genomic_DNA"/>
</dbReference>
<dbReference type="EMBL" id="DQ889502">
    <property type="protein sequence ID" value="ABI63514.1"/>
    <property type="molecule type" value="Genomic_DNA"/>
</dbReference>
<dbReference type="EMBL" id="FJ593289">
    <property type="protein sequence ID" value="ACM62277.1"/>
    <property type="molecule type" value="Genomic_DNA"/>
</dbReference>
<dbReference type="EMBL" id="AH002360">
    <property type="protein sequence ID" value="AAA45827.1"/>
    <property type="molecule type" value="Genomic_DNA"/>
</dbReference>
<dbReference type="PIR" id="A94358">
    <property type="entry name" value="MMBEK2"/>
</dbReference>
<dbReference type="RefSeq" id="YP_009137129.1">
    <property type="nucleotide sequence ID" value="NC_001806.2"/>
</dbReference>
<dbReference type="SMR" id="P68331"/>
<dbReference type="IntAct" id="P68331">
    <property type="interactions" value="1"/>
</dbReference>
<dbReference type="MINT" id="P68331"/>
<dbReference type="ChEMBL" id="CHEMBL2364696"/>
<dbReference type="DrugCentral" id="P68331"/>
<dbReference type="GlyCosmos" id="P68331">
    <property type="glycosylation" value="2 sites, No reported glycans"/>
</dbReference>
<dbReference type="DNASU" id="2703425"/>
<dbReference type="GeneID" id="2703425"/>
<dbReference type="KEGG" id="vg:2703425"/>
<dbReference type="PRO" id="PR:P68331"/>
<dbReference type="Proteomes" id="UP000009294">
    <property type="component" value="Segment"/>
</dbReference>
<dbReference type="Proteomes" id="UP000180652">
    <property type="component" value="Segment"/>
</dbReference>
<dbReference type="GO" id="GO:0044175">
    <property type="term" value="C:host cell endosome membrane"/>
    <property type="evidence" value="ECO:0007669"/>
    <property type="project" value="UniProtKB-SubCell"/>
</dbReference>
<dbReference type="GO" id="GO:0044178">
    <property type="term" value="C:host cell Golgi membrane"/>
    <property type="evidence" value="ECO:0007669"/>
    <property type="project" value="UniProtKB-SubCell"/>
</dbReference>
<dbReference type="GO" id="GO:0020002">
    <property type="term" value="C:host cell plasma membrane"/>
    <property type="evidence" value="ECO:0007669"/>
    <property type="project" value="UniProtKB-SubCell"/>
</dbReference>
<dbReference type="GO" id="GO:0016020">
    <property type="term" value="C:membrane"/>
    <property type="evidence" value="ECO:0007669"/>
    <property type="project" value="UniProtKB-KW"/>
</dbReference>
<dbReference type="GO" id="GO:0039700">
    <property type="term" value="P:fusion of viral membrane with host outer nuclear membrane"/>
    <property type="evidence" value="ECO:0007669"/>
    <property type="project" value="UniProtKB-KW"/>
</dbReference>
<dbReference type="GO" id="GO:0060141">
    <property type="term" value="P:symbiont-mediated induction of syncytium formation"/>
    <property type="evidence" value="ECO:0007669"/>
    <property type="project" value="UniProtKB-KW"/>
</dbReference>
<dbReference type="InterPro" id="IPR002567">
    <property type="entry name" value="GK"/>
</dbReference>
<dbReference type="Pfam" id="PF01621">
    <property type="entry name" value="Fusion_gly_K"/>
    <property type="match status" value="1"/>
</dbReference>
<comment type="function">
    <text evidence="4 5">Glycoprotein that probably modulates membrane fusion events during secondary envelopment of cytoplasmic capsids that bud into specific trans-Golgi network (TGN)-derived membranes. Also plays a role, together with gB, in virus-induced cell-to-cell fusion (syncytia formation). Seems to block fusion of virions with infected-cell membranes.</text>
</comment>
<comment type="subunit">
    <text evidence="6">Interacts (via UL20 interaction region) with protein UL20 (via N-terminus); this interaction probably plays a role in the coordinate transport of protein UL20 and gK to the trans-Golgi network (TGN), and is required for the cell surface expression of gK.</text>
</comment>
<comment type="interaction">
    <interactant intactId="EBI-7906305">
        <id>P68331</id>
    </interactant>
    <interactant intactId="EBI-7906325">
        <id>P10204</id>
        <label>UL20</label>
    </interactant>
    <organismsDiffer>false</organismsDiffer>
    <experiments>5</experiments>
</comment>
<comment type="subcellular location">
    <subcellularLocation>
        <location>Host cell membrane</location>
        <topology>Multi-pass membrane protein</topology>
    </subcellularLocation>
    <subcellularLocation>
        <location evidence="1">Host endosome membrane</location>
        <topology evidence="1">Multi-pass membrane protein</topology>
    </subcellularLocation>
    <subcellularLocation>
        <location>Host Golgi apparatus membrane</location>
        <topology>Multi-pass membrane protein</topology>
    </subcellularLocation>
    <text>During virion morphogenesis, this protein probably accumulates in the endosomes and trans-Golgi where secondary envelopment occurs. It is probably transported with UL20 to the cell surface from where it is endocytosed and directed to the trans-Golgi network (TGN). Cell surface expression of gK is required for virus-induced cell-to-cell fusion. Likely not present in extracellular virions.</text>
</comment>
<comment type="PTM">
    <text>N-glycosylated.</text>
</comment>
<comment type="similarity">
    <text evidence="9">Belongs to the alphaherpesvirinae glycoprotein K family.</text>
</comment>
<gene>
    <name type="primary">gK</name>
    <name type="ORF">UL53</name>
</gene>
<sequence length="338" mass="37573">MLAVRSLQHLSTVVLITAYGLVLVWYTVFGASPLHRCIYAVRPTGTNNDTALVWMKMNQTLLFLGAPTHPPNGGWRNHAHICYANLIAGRVVPFQVPPDAMNRRIMNVHEAVNCLETLWYTRVRLVVVGWFLYLAFVALHQRRCMFGVVSPAHKMVAPATYLLNYAGRIVSSVFLQYPYTKITRLLCELSVQRQNLVQLFETDPVTFLYHRPAIGVIVGCELMLRFVAVGLIVGTAFISRGACAITYPLFLTITTWCFVSTIGLTELYCILRRGPAPKNADKAAAPGRSKGLSGVCGRCCSIILSGIAVRLCYIAVVAGVVLVALHYEQEIQRRLFDV</sequence>
<proteinExistence type="evidence at protein level"/>
<reference key="1">
    <citation type="journal article" date="1988" name="J. Gen. Virol.">
        <title>The complete DNA sequence of the long unique region in the genome of herpes simplex virus type 1.</title>
        <authorList>
            <person name="McGeoch D.J."/>
            <person name="Dalrymple M.A."/>
            <person name="Davison A.J."/>
            <person name="Dolan A."/>
            <person name="Frame M.C."/>
            <person name="McNab D."/>
            <person name="Perry L.J."/>
            <person name="Scott J.E."/>
            <person name="Taylor P."/>
        </authorList>
    </citation>
    <scope>NUCLEOTIDE SEQUENCE [LARGE SCALE GENOMIC DNA]</scope>
</reference>
<reference key="2">
    <citation type="journal article" date="2007" name="Microbes Infect.">
        <title>Determination and analysis of the DNA sequence of highly attenuated herpes simplex virus type 1 mutant HF10, a potential oncolytic virus.</title>
        <authorList>
            <person name="Ushijima Y."/>
            <person name="Luo C."/>
            <person name="Goshima F."/>
            <person name="Yamauchi Y."/>
            <person name="Kimura H."/>
            <person name="Nishiyama Y."/>
        </authorList>
    </citation>
    <scope>NUCLEOTIDE SEQUENCE [LARGE SCALE GENOMIC DNA]</scope>
    <source>
        <strain>Nonneuroinvasive mutant HF10</strain>
    </source>
</reference>
<reference key="3">
    <citation type="submission" date="2008-12" db="EMBL/GenBank/DDBJ databases">
        <title>Herpes simplex virus type 1 bacterial artificial chromosome.</title>
        <authorList>
            <person name="Cunningham C."/>
            <person name="Davison A.J."/>
        </authorList>
    </citation>
    <scope>NUCLEOTIDE SEQUENCE [LARGE SCALE GENOMIC DNA]</scope>
    <source>
        <strain>17 syn+</strain>
    </source>
</reference>
<reference key="4">
    <citation type="journal article" date="1988" name="J. Virol.">
        <title>Structures of herpes simplex virus type 1 genes required for replication of virus DNA.</title>
        <authorList>
            <person name="McGeoch D.J."/>
            <person name="Dalrymple M.A."/>
            <person name="Dolan A."/>
            <person name="McNab D."/>
            <person name="Perry L.J."/>
            <person name="Taylor P."/>
            <person name="Challberg M.D."/>
        </authorList>
    </citation>
    <scope>NUCLEOTIDE SEQUENCE [GENOMIC DNA] OF 1-76</scope>
</reference>
<reference key="5">
    <citation type="journal article" date="1992" name="Virology">
        <title>In vitro characterization of the HSV-1 UL53 gene product.</title>
        <authorList>
            <person name="Ramaswamy R."/>
            <person name="Holland T.C."/>
        </authorList>
    </citation>
    <scope>CHARACTERIZATION</scope>
    <scope>IDENTIFICATION OF N-TERMINUS</scope>
</reference>
<reference key="6">
    <citation type="journal article" date="1994" name="J. Virol.">
        <title>Syncytial mutations in the herpes simplex virus type 1 gK (UL53) gene occur in two distinct domains.</title>
        <authorList>
            <person name="Dolter K.E."/>
            <person name="Ramaswamy R."/>
            <person name="Holland T.C."/>
        </authorList>
    </citation>
    <scope>MUTAGENESIS OF PRO-33; ALA-40; LEU-86; ASP-99; ALA-111; THR-121; LEU-304 AND ARG-310</scope>
</reference>
<reference key="7">
    <citation type="journal article" date="1997" name="J. Biol. Chem.">
        <title>Determination of the transmembrane topology of herpes simplex virus type 1 glycoprotein K.</title>
        <authorList>
            <person name="Mo C."/>
            <person name="Holland T.C."/>
        </authorList>
    </citation>
    <scope>TOPOLOGY</scope>
</reference>
<reference key="8">
    <citation type="journal article" date="2001" name="J. Virol.">
        <title>Glycoprotein K specified by herpes simplex virus type 1 is expressed on virions as a Golgi complex-dependent glycosylated species and functions in virion entry.</title>
        <authorList>
            <person name="Foster T.P."/>
            <person name="Rybachuk G.V."/>
            <person name="Kousoulas K.G."/>
        </authorList>
    </citation>
    <scope>SUBCELLULAR LOCATION</scope>
    <source>
        <strain>KOS</strain>
    </source>
</reference>
<reference key="9">
    <citation type="journal article" date="2003" name="J. Virol.">
        <title>Plasma membrane topology of syncytial domains of herpes simplex virus type 1 glycoprotein K (gK): the UL20 protein enables cell surface localization of gK but not gK-mediated cell-to-cell fusion.</title>
        <authorList>
            <person name="Foster T.P."/>
            <person name="Alvarez X."/>
            <person name="Kousoulas K.G."/>
        </authorList>
    </citation>
    <scope>SUBCELLULAR LOCATION</scope>
    <scope>TOPOLOGY</scope>
    <scope>MUTAGENESIS OF ALA-40</scope>
</reference>
<reference key="10">
    <citation type="journal article" date="2004" name="J. Virol.">
        <title>The herpes simplex virus type 1 UL20 protein modulates membrane fusion events during cytoplasmic virion morphogenesis and virus-induced cell fusion.</title>
        <authorList>
            <person name="Foster T.P."/>
            <person name="Melancon J.M."/>
            <person name="Baines J.D."/>
            <person name="Kousoulas K.G."/>
        </authorList>
    </citation>
    <scope>FUNCTION</scope>
</reference>
<reference key="11">
    <citation type="journal article" date="2004" name="J. Virol.">
        <title>Herpes simplex virus type 1 glycoprotein K and the UL20 protein are interdependent for intracellular trafficking and trans-Golgi network localization.</title>
        <authorList>
            <person name="Foster T.P."/>
            <person name="Melancon J.M."/>
            <person name="Olivier T.L."/>
            <person name="Kousoulas K.G."/>
        </authorList>
    </citation>
    <scope>SUBCELLULAR LOCATION</scope>
</reference>
<reference key="12">
    <citation type="journal article" date="2005" name="J. Virol.">
        <title>Herpes simplex virus type 1 gK is required for gB-mediated virus-induced cell fusion, while neither gB and gK nor gB and UL20p function redundantly in virion de-envelopment.</title>
        <authorList>
            <person name="Melancon J.M."/>
            <person name="Luna R.E."/>
            <person name="Foster T.P."/>
            <person name="Kousoulas K.G."/>
        </authorList>
    </citation>
    <scope>FUNCTION</scope>
</reference>
<reference key="13">
    <citation type="journal article" date="2008" name="J. Virol.">
        <title>Functional and physical interactions of the herpes simplex virus type 1 UL20 membrane protein with glycoprotein K.</title>
        <authorList>
            <person name="Foster T.P."/>
            <person name="Chouljenko V.N."/>
            <person name="Kousoulas K.G."/>
        </authorList>
    </citation>
    <scope>INTERACTION WITH UL20</scope>
</reference>
<reference key="14">
    <citation type="journal article" date="2008" name="J. Virol.">
        <title>Comprehensive characterization of extracellular herpes simplex virus type 1 virions.</title>
        <authorList>
            <person name="Loret S."/>
            <person name="Guay G."/>
            <person name="Lippe R."/>
        </authorList>
    </citation>
    <scope>SUBCELLULAR LOCATION</scope>
    <source>
        <strain>F</strain>
    </source>
</reference>
<accession>P68331</accession>
<accession>B9VQI2</accession>
<accession>P10237</accession>
<accession>Q09I81</accession>
<organismHost>
    <name type="scientific">Homo sapiens</name>
    <name type="common">Human</name>
    <dbReference type="NCBI Taxonomy" id="9606"/>
</organismHost>
<organism>
    <name type="scientific">Human herpesvirus 1 (strain 17)</name>
    <name type="common">HHV-1</name>
    <name type="synonym">Human herpes simplex virus 1</name>
    <dbReference type="NCBI Taxonomy" id="10299"/>
    <lineage>
        <taxon>Viruses</taxon>
        <taxon>Duplodnaviria</taxon>
        <taxon>Heunggongvirae</taxon>
        <taxon>Peploviricota</taxon>
        <taxon>Herviviricetes</taxon>
        <taxon>Herpesvirales</taxon>
        <taxon>Orthoherpesviridae</taxon>
        <taxon>Alphaherpesvirinae</taxon>
        <taxon>Simplexvirus</taxon>
        <taxon>Simplexvirus humanalpha1</taxon>
        <taxon>Human herpesvirus 1</taxon>
    </lineage>
</organism>
<keyword id="KW-0325">Glycoprotein</keyword>
<keyword id="KW-1032">Host cell membrane</keyword>
<keyword id="KW-1039">Host endosome</keyword>
<keyword id="KW-1040">Host Golgi apparatus</keyword>
<keyword id="KW-1043">Host membrane</keyword>
<keyword id="KW-0472">Membrane</keyword>
<keyword id="KW-1185">Reference proteome</keyword>
<keyword id="KW-0732">Signal</keyword>
<keyword id="KW-1180">Syncytium formation induced by viral infection</keyword>
<keyword id="KW-0812">Transmembrane</keyword>
<keyword id="KW-1133">Transmembrane helix</keyword>
<keyword id="KW-1181">Viral primary envelope fusion with host outer nuclear membrane</keyword>
<keyword id="KW-1188">Viral release from host cell</keyword>
<name>GK_HHV11</name>